<evidence type="ECO:0000255" key="1"/>
<evidence type="ECO:0000305" key="2"/>
<evidence type="ECO:0000312" key="3">
    <source>
        <dbReference type="HGNC" id="HGNC:31420"/>
    </source>
</evidence>
<keyword id="KW-0472">Membrane</keyword>
<keyword id="KW-1185">Reference proteome</keyword>
<keyword id="KW-0812">Transmembrane</keyword>
<keyword id="KW-1133">Transmembrane helix</keyword>
<protein>
    <recommendedName>
        <fullName evidence="2">Small integral membrane protein 27</fullName>
    </recommendedName>
    <alternativeName>
        <fullName evidence="2">TOPORS antisense RNA 1</fullName>
    </alternativeName>
</protein>
<sequence length="55" mass="6429">MKPVSRRTLDWIYSVLLLAIVLISWGCIIYASMVSARRQLRKKYPDKIFGTNENL</sequence>
<dbReference type="EMBL" id="AI247328">
    <property type="status" value="NOT_ANNOTATED_CDS"/>
    <property type="molecule type" value="mRNA"/>
</dbReference>
<dbReference type="EMBL" id="AL353671">
    <property type="status" value="NOT_ANNOTATED_CDS"/>
    <property type="molecule type" value="Genomic_DNA"/>
</dbReference>
<dbReference type="CCDS" id="CCDS87647.1"/>
<dbReference type="RefSeq" id="NP_001336047.1">
    <property type="nucleotide sequence ID" value="NM_001349118.1"/>
</dbReference>
<dbReference type="RefSeq" id="NP_001336048.1">
    <property type="nucleotide sequence ID" value="NM_001349119.2"/>
</dbReference>
<dbReference type="RefSeq" id="NP_001374493.1">
    <property type="nucleotide sequence ID" value="NM_001387564.1"/>
</dbReference>
<dbReference type="SMR" id="A0A1B0GUW7"/>
<dbReference type="FunCoup" id="A0A1B0GUW7">
    <property type="interactions" value="4"/>
</dbReference>
<dbReference type="STRING" id="9606.ENSP00000490275"/>
<dbReference type="BioMuta" id="SMIM27"/>
<dbReference type="PeptideAtlas" id="A0A1B0GUW7"/>
<dbReference type="Ensembl" id="ENST00000450093.3">
    <property type="protein sequence ID" value="ENSP00000490727.2"/>
    <property type="gene ID" value="ENSG00000235453.12"/>
</dbReference>
<dbReference type="Ensembl" id="ENST00000453396.5">
    <property type="protein sequence ID" value="ENSP00000490275.1"/>
    <property type="gene ID" value="ENSG00000235453.12"/>
</dbReference>
<dbReference type="Ensembl" id="ENST00000692500.1">
    <property type="protein sequence ID" value="ENSP00000508648.1"/>
    <property type="gene ID" value="ENSG00000235453.12"/>
</dbReference>
<dbReference type="GeneID" id="100129250"/>
<dbReference type="MANE-Select" id="ENST00000692500.1">
    <property type="protein sequence ID" value="ENSP00000508648.1"/>
    <property type="RefSeq nucleotide sequence ID" value="NM_001387564.1"/>
    <property type="RefSeq protein sequence ID" value="NP_001374493.1"/>
</dbReference>
<dbReference type="AGR" id="HGNC:31420"/>
<dbReference type="GeneCards" id="SMIM27"/>
<dbReference type="HGNC" id="HGNC:31420">
    <property type="gene designation" value="SMIM27"/>
</dbReference>
<dbReference type="HPA" id="ENSG00000235453">
    <property type="expression patterns" value="Low tissue specificity"/>
</dbReference>
<dbReference type="neXtProt" id="NX_A0A1B0GUW7"/>
<dbReference type="OpenTargets" id="ENSG00000235453"/>
<dbReference type="VEuPathDB" id="HostDB:ENSG00000235453"/>
<dbReference type="GeneTree" id="ENSGT01020000230598"/>
<dbReference type="InParanoid" id="A0A1B0GUW7"/>
<dbReference type="OMA" id="RIAAKWH"/>
<dbReference type="OrthoDB" id="9829481at2759"/>
<dbReference type="PAN-GO" id="A0A1B0GUW7">
    <property type="GO annotations" value="0 GO annotations based on evolutionary models"/>
</dbReference>
<dbReference type="SignaLink" id="A0A1B0GUW7"/>
<dbReference type="ChiTaRS" id="TOPORS-AS1">
    <property type="organism name" value="human"/>
</dbReference>
<dbReference type="Pharos" id="A0A1B0GUW7">
    <property type="development level" value="Tdark"/>
</dbReference>
<dbReference type="PRO" id="PR:A0A1B0GUW7"/>
<dbReference type="Proteomes" id="UP000005640">
    <property type="component" value="Chromosome 9"/>
</dbReference>
<dbReference type="Bgee" id="ENSG00000235453">
    <property type="expression patterns" value="Expressed in left testis and 187 other cell types or tissues"/>
</dbReference>
<dbReference type="ExpressionAtlas" id="A0A1B0GUW7">
    <property type="expression patterns" value="baseline and differential"/>
</dbReference>
<dbReference type="GO" id="GO:0016020">
    <property type="term" value="C:membrane"/>
    <property type="evidence" value="ECO:0007669"/>
    <property type="project" value="UniProtKB-SubCell"/>
</dbReference>
<reference key="1">
    <citation type="submission" date="1998-11" db="EMBL/GenBank/DDBJ databases">
        <authorList>
            <consortium name="The Cancer Genome Anatomy Project (CGAP) at the National Cancer Institute"/>
        </authorList>
    </citation>
    <scope>NUCLEOTIDE SEQUENCE [LARGE SCALE MRNA]</scope>
</reference>
<reference key="2">
    <citation type="journal article" date="2004" name="Nature">
        <title>DNA sequence and analysis of human chromosome 9.</title>
        <authorList>
            <person name="Humphray S.J."/>
            <person name="Oliver K."/>
            <person name="Hunt A.R."/>
            <person name="Plumb R.W."/>
            <person name="Loveland J.E."/>
            <person name="Howe K.L."/>
            <person name="Andrews T.D."/>
            <person name="Searle S."/>
            <person name="Hunt S.E."/>
            <person name="Scott C.E."/>
            <person name="Jones M.C."/>
            <person name="Ainscough R."/>
            <person name="Almeida J.P."/>
            <person name="Ambrose K.D."/>
            <person name="Ashwell R.I.S."/>
            <person name="Babbage A.K."/>
            <person name="Babbage S."/>
            <person name="Bagguley C.L."/>
            <person name="Bailey J."/>
            <person name="Banerjee R."/>
            <person name="Barker D.J."/>
            <person name="Barlow K.F."/>
            <person name="Bates K."/>
            <person name="Beasley H."/>
            <person name="Beasley O."/>
            <person name="Bird C.P."/>
            <person name="Bray-Allen S."/>
            <person name="Brown A.J."/>
            <person name="Brown J.Y."/>
            <person name="Burford D."/>
            <person name="Burrill W."/>
            <person name="Burton J."/>
            <person name="Carder C."/>
            <person name="Carter N.P."/>
            <person name="Chapman J.C."/>
            <person name="Chen Y."/>
            <person name="Clarke G."/>
            <person name="Clark S.Y."/>
            <person name="Clee C.M."/>
            <person name="Clegg S."/>
            <person name="Collier R.E."/>
            <person name="Corby N."/>
            <person name="Crosier M."/>
            <person name="Cummings A.T."/>
            <person name="Davies J."/>
            <person name="Dhami P."/>
            <person name="Dunn M."/>
            <person name="Dutta I."/>
            <person name="Dyer L.W."/>
            <person name="Earthrowl M.E."/>
            <person name="Faulkner L."/>
            <person name="Fleming C.J."/>
            <person name="Frankish A."/>
            <person name="Frankland J.A."/>
            <person name="French L."/>
            <person name="Fricker D.G."/>
            <person name="Garner P."/>
            <person name="Garnett J."/>
            <person name="Ghori J."/>
            <person name="Gilbert J.G.R."/>
            <person name="Glison C."/>
            <person name="Grafham D.V."/>
            <person name="Gribble S."/>
            <person name="Griffiths C."/>
            <person name="Griffiths-Jones S."/>
            <person name="Grocock R."/>
            <person name="Guy J."/>
            <person name="Hall R.E."/>
            <person name="Hammond S."/>
            <person name="Harley J.L."/>
            <person name="Harrison E.S.I."/>
            <person name="Hart E.A."/>
            <person name="Heath P.D."/>
            <person name="Henderson C.D."/>
            <person name="Hopkins B.L."/>
            <person name="Howard P.J."/>
            <person name="Howden P.J."/>
            <person name="Huckle E."/>
            <person name="Johnson C."/>
            <person name="Johnson D."/>
            <person name="Joy A.A."/>
            <person name="Kay M."/>
            <person name="Keenan S."/>
            <person name="Kershaw J.K."/>
            <person name="Kimberley A.M."/>
            <person name="King A."/>
            <person name="Knights A."/>
            <person name="Laird G.K."/>
            <person name="Langford C."/>
            <person name="Lawlor S."/>
            <person name="Leongamornlert D.A."/>
            <person name="Leversha M."/>
            <person name="Lloyd C."/>
            <person name="Lloyd D.M."/>
            <person name="Lovell J."/>
            <person name="Martin S."/>
            <person name="Mashreghi-Mohammadi M."/>
            <person name="Matthews L."/>
            <person name="McLaren S."/>
            <person name="McLay K.E."/>
            <person name="McMurray A."/>
            <person name="Milne S."/>
            <person name="Nickerson T."/>
            <person name="Nisbett J."/>
            <person name="Nordsiek G."/>
            <person name="Pearce A.V."/>
            <person name="Peck A.I."/>
            <person name="Porter K.M."/>
            <person name="Pandian R."/>
            <person name="Pelan S."/>
            <person name="Phillimore B."/>
            <person name="Povey S."/>
            <person name="Ramsey Y."/>
            <person name="Rand V."/>
            <person name="Scharfe M."/>
            <person name="Sehra H.K."/>
            <person name="Shownkeen R."/>
            <person name="Sims S.K."/>
            <person name="Skuce C.D."/>
            <person name="Smith M."/>
            <person name="Steward C.A."/>
            <person name="Swarbreck D."/>
            <person name="Sycamore N."/>
            <person name="Tester J."/>
            <person name="Thorpe A."/>
            <person name="Tracey A."/>
            <person name="Tromans A."/>
            <person name="Thomas D.W."/>
            <person name="Wall M."/>
            <person name="Wallis J.M."/>
            <person name="West A.P."/>
            <person name="Whitehead S.L."/>
            <person name="Willey D.L."/>
            <person name="Williams S.A."/>
            <person name="Wilming L."/>
            <person name="Wray P.W."/>
            <person name="Young L."/>
            <person name="Ashurst J.L."/>
            <person name="Coulson A."/>
            <person name="Blocker H."/>
            <person name="Durbin R.M."/>
            <person name="Sulston J.E."/>
            <person name="Hubbard T."/>
            <person name="Jackson M.J."/>
            <person name="Bentley D.R."/>
            <person name="Beck S."/>
            <person name="Rogers J."/>
            <person name="Dunham I."/>
        </authorList>
    </citation>
    <scope>NUCLEOTIDE SEQUENCE [LARGE SCALE GENOMIC DNA]</scope>
</reference>
<accession>A0A1B0GUW7</accession>
<proteinExistence type="inferred from homology"/>
<organism>
    <name type="scientific">Homo sapiens</name>
    <name type="common">Human</name>
    <dbReference type="NCBI Taxonomy" id="9606"/>
    <lineage>
        <taxon>Eukaryota</taxon>
        <taxon>Metazoa</taxon>
        <taxon>Chordata</taxon>
        <taxon>Craniata</taxon>
        <taxon>Vertebrata</taxon>
        <taxon>Euteleostomi</taxon>
        <taxon>Mammalia</taxon>
        <taxon>Eutheria</taxon>
        <taxon>Euarchontoglires</taxon>
        <taxon>Primates</taxon>
        <taxon>Haplorrhini</taxon>
        <taxon>Catarrhini</taxon>
        <taxon>Hominidae</taxon>
        <taxon>Homo</taxon>
    </lineage>
</organism>
<name>SIM27_HUMAN</name>
<feature type="chain" id="PRO_0000443388" description="Small integral membrane protein 27">
    <location>
        <begin position="1"/>
        <end position="55"/>
    </location>
</feature>
<feature type="transmembrane region" description="Helical" evidence="1">
    <location>
        <begin position="11"/>
        <end position="31"/>
    </location>
</feature>
<gene>
    <name evidence="3" type="primary">SMIM27</name>
    <name evidence="3" type="synonym">C9orf133</name>
    <name evidence="3" type="synonym">TOPORS-AS1</name>
</gene>
<comment type="subcellular location">
    <subcellularLocation>
        <location evidence="1">Membrane</location>
        <topology evidence="1">Single-pass membrane protein</topology>
    </subcellularLocation>
</comment>